<protein>
    <recommendedName>
        <fullName evidence="1">CTP synthase</fullName>
        <ecNumber evidence="1">6.3.4.2</ecNumber>
    </recommendedName>
    <alternativeName>
        <fullName evidence="1">Cytidine 5'-triphosphate synthase</fullName>
    </alternativeName>
    <alternativeName>
        <fullName evidence="1">Cytidine triphosphate synthetase</fullName>
        <shortName evidence="1">CTP synthetase</shortName>
        <shortName evidence="1">CTPS</shortName>
    </alternativeName>
    <alternativeName>
        <fullName evidence="1">UTP--ammonia ligase</fullName>
    </alternativeName>
</protein>
<comment type="function">
    <text evidence="1">Catalyzes the ATP-dependent amination of UTP to CTP with either L-glutamine or ammonia as the source of nitrogen. Regulates intracellular CTP levels through interactions with the four ribonucleotide triphosphates.</text>
</comment>
<comment type="catalytic activity">
    <reaction evidence="1">
        <text>UTP + L-glutamine + ATP + H2O = CTP + L-glutamate + ADP + phosphate + 2 H(+)</text>
        <dbReference type="Rhea" id="RHEA:26426"/>
        <dbReference type="ChEBI" id="CHEBI:15377"/>
        <dbReference type="ChEBI" id="CHEBI:15378"/>
        <dbReference type="ChEBI" id="CHEBI:29985"/>
        <dbReference type="ChEBI" id="CHEBI:30616"/>
        <dbReference type="ChEBI" id="CHEBI:37563"/>
        <dbReference type="ChEBI" id="CHEBI:43474"/>
        <dbReference type="ChEBI" id="CHEBI:46398"/>
        <dbReference type="ChEBI" id="CHEBI:58359"/>
        <dbReference type="ChEBI" id="CHEBI:456216"/>
        <dbReference type="EC" id="6.3.4.2"/>
    </reaction>
</comment>
<comment type="catalytic activity">
    <reaction evidence="1">
        <text>L-glutamine + H2O = L-glutamate + NH4(+)</text>
        <dbReference type="Rhea" id="RHEA:15889"/>
        <dbReference type="ChEBI" id="CHEBI:15377"/>
        <dbReference type="ChEBI" id="CHEBI:28938"/>
        <dbReference type="ChEBI" id="CHEBI:29985"/>
        <dbReference type="ChEBI" id="CHEBI:58359"/>
    </reaction>
</comment>
<comment type="catalytic activity">
    <reaction evidence="1">
        <text>UTP + NH4(+) + ATP = CTP + ADP + phosphate + 2 H(+)</text>
        <dbReference type="Rhea" id="RHEA:16597"/>
        <dbReference type="ChEBI" id="CHEBI:15378"/>
        <dbReference type="ChEBI" id="CHEBI:28938"/>
        <dbReference type="ChEBI" id="CHEBI:30616"/>
        <dbReference type="ChEBI" id="CHEBI:37563"/>
        <dbReference type="ChEBI" id="CHEBI:43474"/>
        <dbReference type="ChEBI" id="CHEBI:46398"/>
        <dbReference type="ChEBI" id="CHEBI:456216"/>
    </reaction>
</comment>
<comment type="activity regulation">
    <text evidence="1">Allosterically activated by GTP, when glutamine is the substrate; GTP has no effect on the reaction when ammonia is the substrate. The allosteric effector GTP functions by stabilizing the protein conformation that binds the tetrahedral intermediate(s) formed during glutamine hydrolysis. Inhibited by the product CTP, via allosteric rather than competitive inhibition.</text>
</comment>
<comment type="pathway">
    <text evidence="1">Pyrimidine metabolism; CTP biosynthesis via de novo pathway; CTP from UDP: step 2/2.</text>
</comment>
<comment type="subunit">
    <text evidence="1">Homotetramer.</text>
</comment>
<comment type="miscellaneous">
    <text evidence="1">CTPSs have evolved a hybrid strategy for distinguishing between UTP and CTP. The overlapping regions of the product feedback inhibitory and substrate sites recognize a common feature in both compounds, the triphosphate moiety. To differentiate isosteric substrate and product pyrimidine rings, an additional pocket far from the expected kinase/ligase catalytic site, specifically recognizes the cytosine and ribose portions of the product inhibitor.</text>
</comment>
<comment type="similarity">
    <text evidence="1">Belongs to the CTP synthase family.</text>
</comment>
<accession>B0BXB3</accession>
<keyword id="KW-0067">ATP-binding</keyword>
<keyword id="KW-0315">Glutamine amidotransferase</keyword>
<keyword id="KW-0436">Ligase</keyword>
<keyword id="KW-0460">Magnesium</keyword>
<keyword id="KW-0479">Metal-binding</keyword>
<keyword id="KW-0547">Nucleotide-binding</keyword>
<keyword id="KW-0665">Pyrimidine biosynthesis</keyword>
<proteinExistence type="inferred from homology"/>
<organism>
    <name type="scientific">Rickettsia rickettsii (strain Iowa)</name>
    <dbReference type="NCBI Taxonomy" id="452659"/>
    <lineage>
        <taxon>Bacteria</taxon>
        <taxon>Pseudomonadati</taxon>
        <taxon>Pseudomonadota</taxon>
        <taxon>Alphaproteobacteria</taxon>
        <taxon>Rickettsiales</taxon>
        <taxon>Rickettsiaceae</taxon>
        <taxon>Rickettsieae</taxon>
        <taxon>Rickettsia</taxon>
        <taxon>spotted fever group</taxon>
    </lineage>
</organism>
<sequence>MVHFIFVTGGVVSSLGKGLTAASLAMLLQAKGFRVSVRKLDPYLNIDPGTMNPHEHGEVYVTDDGAETDLDLGHYERFTGVSACKFDSITTGAIYSKLLKDERLGNYAGVTVQVIPHVTNIIKDFILSNTKGVDFIICEIGGTVGDIEGLPFFEAIRQIGNQLKSENCLFIHLTLLPYVKTARELKIKPTQHSVKALRAIGISPNILVCRAERHISKGAIDKISLLCNIKSEYVVPAIDQKNIYLVPIAYHNSGLDNKVLKFFNINIMPSKLDKWYDIINRLKDSNSKVRIAIIAKYHKLKDAYKSVIEALNHAGIYYKYKIDLVWTNAENLTEESINKKLLDIDGILVPGGFGERATKGKIIAIKYARTNNIPFFGICFGMQLATIEIAQNLIGIKDAVTEEFKVDGTKIIEKINKNCEDSKITIENVKKTMRLGSYPCSLVANTIAANAYKSLEINERHRHRYKFNNEFQNIFEKHGIVFSGFSKDEEIVEIIELPLLRWFVGVQFHPEFKSKPFEAHPLFIQFIKAAIEYNKCN</sequence>
<name>PYRG_RICRO</name>
<evidence type="ECO:0000255" key="1">
    <source>
        <dbReference type="HAMAP-Rule" id="MF_01227"/>
    </source>
</evidence>
<feature type="chain" id="PRO_1000139551" description="CTP synthase">
    <location>
        <begin position="1"/>
        <end position="537"/>
    </location>
</feature>
<feature type="domain" description="Glutamine amidotransferase type-1" evidence="1">
    <location>
        <begin position="290"/>
        <end position="536"/>
    </location>
</feature>
<feature type="region of interest" description="Amidoligase domain" evidence="1">
    <location>
        <begin position="1"/>
        <end position="265"/>
    </location>
</feature>
<feature type="active site" description="Nucleophile; for glutamine hydrolysis" evidence="1">
    <location>
        <position position="379"/>
    </location>
</feature>
<feature type="active site" evidence="1">
    <location>
        <position position="509"/>
    </location>
</feature>
<feature type="active site" evidence="1">
    <location>
        <position position="511"/>
    </location>
</feature>
<feature type="binding site" evidence="1">
    <location>
        <position position="13"/>
    </location>
    <ligand>
        <name>CTP</name>
        <dbReference type="ChEBI" id="CHEBI:37563"/>
        <note>allosteric inhibitor</note>
    </ligand>
</feature>
<feature type="binding site" evidence="1">
    <location>
        <position position="13"/>
    </location>
    <ligand>
        <name>UTP</name>
        <dbReference type="ChEBI" id="CHEBI:46398"/>
    </ligand>
</feature>
<feature type="binding site" evidence="1">
    <location>
        <begin position="14"/>
        <end position="19"/>
    </location>
    <ligand>
        <name>ATP</name>
        <dbReference type="ChEBI" id="CHEBI:30616"/>
    </ligand>
</feature>
<feature type="binding site" evidence="1">
    <location>
        <position position="71"/>
    </location>
    <ligand>
        <name>ATP</name>
        <dbReference type="ChEBI" id="CHEBI:30616"/>
    </ligand>
</feature>
<feature type="binding site" evidence="1">
    <location>
        <position position="71"/>
    </location>
    <ligand>
        <name>Mg(2+)</name>
        <dbReference type="ChEBI" id="CHEBI:18420"/>
    </ligand>
</feature>
<feature type="binding site" evidence="1">
    <location>
        <position position="139"/>
    </location>
    <ligand>
        <name>Mg(2+)</name>
        <dbReference type="ChEBI" id="CHEBI:18420"/>
    </ligand>
</feature>
<feature type="binding site" evidence="1">
    <location>
        <begin position="146"/>
        <end position="148"/>
    </location>
    <ligand>
        <name>CTP</name>
        <dbReference type="ChEBI" id="CHEBI:37563"/>
        <note>allosteric inhibitor</note>
    </ligand>
</feature>
<feature type="binding site" evidence="1">
    <location>
        <position position="222"/>
    </location>
    <ligand>
        <name>CTP</name>
        <dbReference type="ChEBI" id="CHEBI:37563"/>
        <note>allosteric inhibitor</note>
    </ligand>
</feature>
<feature type="binding site" evidence="1">
    <location>
        <position position="222"/>
    </location>
    <ligand>
        <name>UTP</name>
        <dbReference type="ChEBI" id="CHEBI:46398"/>
    </ligand>
</feature>
<feature type="binding site" evidence="1">
    <location>
        <position position="352"/>
    </location>
    <ligand>
        <name>L-glutamine</name>
        <dbReference type="ChEBI" id="CHEBI:58359"/>
    </ligand>
</feature>
<feature type="binding site" evidence="1">
    <location>
        <begin position="380"/>
        <end position="383"/>
    </location>
    <ligand>
        <name>L-glutamine</name>
        <dbReference type="ChEBI" id="CHEBI:58359"/>
    </ligand>
</feature>
<feature type="binding site" evidence="1">
    <location>
        <position position="403"/>
    </location>
    <ligand>
        <name>L-glutamine</name>
        <dbReference type="ChEBI" id="CHEBI:58359"/>
    </ligand>
</feature>
<feature type="binding site" evidence="1">
    <location>
        <position position="464"/>
    </location>
    <ligand>
        <name>L-glutamine</name>
        <dbReference type="ChEBI" id="CHEBI:58359"/>
    </ligand>
</feature>
<dbReference type="EC" id="6.3.4.2" evidence="1"/>
<dbReference type="EMBL" id="CP000766">
    <property type="protein sequence ID" value="ABY72489.1"/>
    <property type="molecule type" value="Genomic_DNA"/>
</dbReference>
<dbReference type="RefSeq" id="WP_012150721.1">
    <property type="nucleotide sequence ID" value="NC_010263.3"/>
</dbReference>
<dbReference type="SMR" id="B0BXB3"/>
<dbReference type="KEGG" id="rrj:RrIowa_0623"/>
<dbReference type="eggNOG" id="COG0504">
    <property type="taxonomic scope" value="Bacteria"/>
</dbReference>
<dbReference type="HOGENOM" id="CLU_011675_5_0_5"/>
<dbReference type="UniPathway" id="UPA00159">
    <property type="reaction ID" value="UER00277"/>
</dbReference>
<dbReference type="Proteomes" id="UP000000796">
    <property type="component" value="Chromosome"/>
</dbReference>
<dbReference type="GO" id="GO:0097268">
    <property type="term" value="C:cytoophidium"/>
    <property type="evidence" value="ECO:0007669"/>
    <property type="project" value="TreeGrafter"/>
</dbReference>
<dbReference type="GO" id="GO:0005737">
    <property type="term" value="C:cytoplasm"/>
    <property type="evidence" value="ECO:0007669"/>
    <property type="project" value="TreeGrafter"/>
</dbReference>
<dbReference type="GO" id="GO:0005524">
    <property type="term" value="F:ATP binding"/>
    <property type="evidence" value="ECO:0007669"/>
    <property type="project" value="UniProtKB-KW"/>
</dbReference>
<dbReference type="GO" id="GO:0003883">
    <property type="term" value="F:CTP synthase activity"/>
    <property type="evidence" value="ECO:0007669"/>
    <property type="project" value="UniProtKB-UniRule"/>
</dbReference>
<dbReference type="GO" id="GO:0004359">
    <property type="term" value="F:glutaminase activity"/>
    <property type="evidence" value="ECO:0007669"/>
    <property type="project" value="RHEA"/>
</dbReference>
<dbReference type="GO" id="GO:0042802">
    <property type="term" value="F:identical protein binding"/>
    <property type="evidence" value="ECO:0007669"/>
    <property type="project" value="TreeGrafter"/>
</dbReference>
<dbReference type="GO" id="GO:0046872">
    <property type="term" value="F:metal ion binding"/>
    <property type="evidence" value="ECO:0007669"/>
    <property type="project" value="UniProtKB-KW"/>
</dbReference>
<dbReference type="GO" id="GO:0044210">
    <property type="term" value="P:'de novo' CTP biosynthetic process"/>
    <property type="evidence" value="ECO:0007669"/>
    <property type="project" value="UniProtKB-UniRule"/>
</dbReference>
<dbReference type="GO" id="GO:0019856">
    <property type="term" value="P:pyrimidine nucleobase biosynthetic process"/>
    <property type="evidence" value="ECO:0007669"/>
    <property type="project" value="TreeGrafter"/>
</dbReference>
<dbReference type="CDD" id="cd03113">
    <property type="entry name" value="CTPS_N"/>
    <property type="match status" value="1"/>
</dbReference>
<dbReference type="CDD" id="cd01746">
    <property type="entry name" value="GATase1_CTP_Synthase"/>
    <property type="match status" value="1"/>
</dbReference>
<dbReference type="FunFam" id="3.40.50.300:FF:000009">
    <property type="entry name" value="CTP synthase"/>
    <property type="match status" value="1"/>
</dbReference>
<dbReference type="FunFam" id="3.40.50.880:FF:000002">
    <property type="entry name" value="CTP synthase"/>
    <property type="match status" value="1"/>
</dbReference>
<dbReference type="Gene3D" id="3.40.50.880">
    <property type="match status" value="1"/>
</dbReference>
<dbReference type="Gene3D" id="3.40.50.300">
    <property type="entry name" value="P-loop containing nucleotide triphosphate hydrolases"/>
    <property type="match status" value="1"/>
</dbReference>
<dbReference type="HAMAP" id="MF_01227">
    <property type="entry name" value="PyrG"/>
    <property type="match status" value="1"/>
</dbReference>
<dbReference type="InterPro" id="IPR029062">
    <property type="entry name" value="Class_I_gatase-like"/>
</dbReference>
<dbReference type="InterPro" id="IPR004468">
    <property type="entry name" value="CTP_synthase"/>
</dbReference>
<dbReference type="InterPro" id="IPR017456">
    <property type="entry name" value="CTP_synthase_N"/>
</dbReference>
<dbReference type="InterPro" id="IPR017926">
    <property type="entry name" value="GATASE"/>
</dbReference>
<dbReference type="InterPro" id="IPR033828">
    <property type="entry name" value="GATase1_CTP_Synthase"/>
</dbReference>
<dbReference type="InterPro" id="IPR027417">
    <property type="entry name" value="P-loop_NTPase"/>
</dbReference>
<dbReference type="NCBIfam" id="NF003792">
    <property type="entry name" value="PRK05380.1"/>
    <property type="match status" value="1"/>
</dbReference>
<dbReference type="NCBIfam" id="TIGR00337">
    <property type="entry name" value="PyrG"/>
    <property type="match status" value="1"/>
</dbReference>
<dbReference type="PANTHER" id="PTHR11550">
    <property type="entry name" value="CTP SYNTHASE"/>
    <property type="match status" value="1"/>
</dbReference>
<dbReference type="PANTHER" id="PTHR11550:SF0">
    <property type="entry name" value="CTP SYNTHASE-RELATED"/>
    <property type="match status" value="1"/>
</dbReference>
<dbReference type="Pfam" id="PF06418">
    <property type="entry name" value="CTP_synth_N"/>
    <property type="match status" value="1"/>
</dbReference>
<dbReference type="Pfam" id="PF00117">
    <property type="entry name" value="GATase"/>
    <property type="match status" value="1"/>
</dbReference>
<dbReference type="SUPFAM" id="SSF52317">
    <property type="entry name" value="Class I glutamine amidotransferase-like"/>
    <property type="match status" value="1"/>
</dbReference>
<dbReference type="SUPFAM" id="SSF52540">
    <property type="entry name" value="P-loop containing nucleoside triphosphate hydrolases"/>
    <property type="match status" value="1"/>
</dbReference>
<dbReference type="PROSITE" id="PS51273">
    <property type="entry name" value="GATASE_TYPE_1"/>
    <property type="match status" value="1"/>
</dbReference>
<reference key="1">
    <citation type="journal article" date="2008" name="Infect. Immun.">
        <title>Genomic comparison of virulent Rickettsia rickettsii Sheila Smith and avirulent Rickettsia rickettsii Iowa.</title>
        <authorList>
            <person name="Ellison D.W."/>
            <person name="Clark T.R."/>
            <person name="Sturdevant D.E."/>
            <person name="Virtaneva K."/>
            <person name="Porcella S.F."/>
            <person name="Hackstadt T."/>
        </authorList>
    </citation>
    <scope>NUCLEOTIDE SEQUENCE [LARGE SCALE GENOMIC DNA]</scope>
    <source>
        <strain>Iowa</strain>
    </source>
</reference>
<gene>
    <name evidence="1" type="primary">pyrG</name>
    <name type="ordered locus">RrIowa_0623</name>
</gene>